<name>GLND_ERYLH</name>
<dbReference type="EC" id="2.7.7.59" evidence="1"/>
<dbReference type="EC" id="3.1.4.-" evidence="1"/>
<dbReference type="EMBL" id="CP000157">
    <property type="protein sequence ID" value="ABC64457.1"/>
    <property type="molecule type" value="Genomic_DNA"/>
</dbReference>
<dbReference type="RefSeq" id="WP_011415280.1">
    <property type="nucleotide sequence ID" value="NC_007722.1"/>
</dbReference>
<dbReference type="SMR" id="Q2N784"/>
<dbReference type="STRING" id="314225.ELI_11825"/>
<dbReference type="KEGG" id="eli:ELI_11825"/>
<dbReference type="eggNOG" id="COG2844">
    <property type="taxonomic scope" value="Bacteria"/>
</dbReference>
<dbReference type="HOGENOM" id="CLU_012833_1_0_5"/>
<dbReference type="OrthoDB" id="9758038at2"/>
<dbReference type="Proteomes" id="UP000008808">
    <property type="component" value="Chromosome"/>
</dbReference>
<dbReference type="GO" id="GO:0008773">
    <property type="term" value="F:[protein-PII] uridylyltransferase activity"/>
    <property type="evidence" value="ECO:0007669"/>
    <property type="project" value="UniProtKB-UniRule"/>
</dbReference>
<dbReference type="GO" id="GO:0008081">
    <property type="term" value="F:phosphoric diester hydrolase activity"/>
    <property type="evidence" value="ECO:0007669"/>
    <property type="project" value="UniProtKB-UniRule"/>
</dbReference>
<dbReference type="GO" id="GO:0006808">
    <property type="term" value="P:regulation of nitrogen utilization"/>
    <property type="evidence" value="ECO:0007669"/>
    <property type="project" value="UniProtKB-UniRule"/>
</dbReference>
<dbReference type="CDD" id="cd04899">
    <property type="entry name" value="ACT_ACR-UUR-like_2"/>
    <property type="match status" value="1"/>
</dbReference>
<dbReference type="CDD" id="cd04900">
    <property type="entry name" value="ACT_UUR-like_1"/>
    <property type="match status" value="1"/>
</dbReference>
<dbReference type="CDD" id="cd00077">
    <property type="entry name" value="HDc"/>
    <property type="match status" value="1"/>
</dbReference>
<dbReference type="CDD" id="cd05401">
    <property type="entry name" value="NT_GlnE_GlnD_like"/>
    <property type="match status" value="1"/>
</dbReference>
<dbReference type="Gene3D" id="3.30.70.260">
    <property type="match status" value="1"/>
</dbReference>
<dbReference type="Gene3D" id="3.30.460.10">
    <property type="entry name" value="Beta Polymerase, domain 2"/>
    <property type="match status" value="1"/>
</dbReference>
<dbReference type="Gene3D" id="1.10.3090.10">
    <property type="entry name" value="cca-adding enzyme, domain 2"/>
    <property type="match status" value="1"/>
</dbReference>
<dbReference type="HAMAP" id="MF_00277">
    <property type="entry name" value="PII_uridylyl_transf"/>
    <property type="match status" value="1"/>
</dbReference>
<dbReference type="InterPro" id="IPR045865">
    <property type="entry name" value="ACT-like_dom_sf"/>
</dbReference>
<dbReference type="InterPro" id="IPR002912">
    <property type="entry name" value="ACT_dom"/>
</dbReference>
<dbReference type="InterPro" id="IPR005105">
    <property type="entry name" value="GlnD_Uridyltrans_N"/>
</dbReference>
<dbReference type="InterPro" id="IPR003607">
    <property type="entry name" value="HD/PDEase_dom"/>
</dbReference>
<dbReference type="InterPro" id="IPR006674">
    <property type="entry name" value="HD_domain"/>
</dbReference>
<dbReference type="InterPro" id="IPR043519">
    <property type="entry name" value="NT_sf"/>
</dbReference>
<dbReference type="InterPro" id="IPR013546">
    <property type="entry name" value="PII_UdlTrfase/GS_AdlTrfase"/>
</dbReference>
<dbReference type="InterPro" id="IPR010043">
    <property type="entry name" value="UTase/UR"/>
</dbReference>
<dbReference type="NCBIfam" id="NF003467">
    <property type="entry name" value="PRK05092.1"/>
    <property type="match status" value="1"/>
</dbReference>
<dbReference type="NCBIfam" id="TIGR01693">
    <property type="entry name" value="UTase_glnD"/>
    <property type="match status" value="1"/>
</dbReference>
<dbReference type="PANTHER" id="PTHR47320">
    <property type="entry name" value="BIFUNCTIONAL URIDYLYLTRANSFERASE/URIDYLYL-REMOVING ENZYME"/>
    <property type="match status" value="1"/>
</dbReference>
<dbReference type="PANTHER" id="PTHR47320:SF1">
    <property type="entry name" value="BIFUNCTIONAL URIDYLYLTRANSFERASE_URIDYLYL-REMOVING ENZYME"/>
    <property type="match status" value="1"/>
</dbReference>
<dbReference type="Pfam" id="PF03445">
    <property type="entry name" value="DUF294"/>
    <property type="match status" value="1"/>
</dbReference>
<dbReference type="Pfam" id="PF08335">
    <property type="entry name" value="GlnD_UR_UTase"/>
    <property type="match status" value="1"/>
</dbReference>
<dbReference type="Pfam" id="PF01966">
    <property type="entry name" value="HD"/>
    <property type="match status" value="1"/>
</dbReference>
<dbReference type="PIRSF" id="PIRSF006288">
    <property type="entry name" value="PII_uridyltransf"/>
    <property type="match status" value="1"/>
</dbReference>
<dbReference type="SMART" id="SM00471">
    <property type="entry name" value="HDc"/>
    <property type="match status" value="1"/>
</dbReference>
<dbReference type="SUPFAM" id="SSF55021">
    <property type="entry name" value="ACT-like"/>
    <property type="match status" value="2"/>
</dbReference>
<dbReference type="SUPFAM" id="SSF81301">
    <property type="entry name" value="Nucleotidyltransferase"/>
    <property type="match status" value="1"/>
</dbReference>
<dbReference type="SUPFAM" id="SSF81593">
    <property type="entry name" value="Nucleotidyltransferase substrate binding subunit/domain"/>
    <property type="match status" value="1"/>
</dbReference>
<dbReference type="SUPFAM" id="SSF81891">
    <property type="entry name" value="Poly A polymerase C-terminal region-like"/>
    <property type="match status" value="1"/>
</dbReference>
<dbReference type="PROSITE" id="PS51671">
    <property type="entry name" value="ACT"/>
    <property type="match status" value="2"/>
</dbReference>
<dbReference type="PROSITE" id="PS51831">
    <property type="entry name" value="HD"/>
    <property type="match status" value="1"/>
</dbReference>
<organism>
    <name type="scientific">Erythrobacter litoralis (strain HTCC2594)</name>
    <dbReference type="NCBI Taxonomy" id="314225"/>
    <lineage>
        <taxon>Bacteria</taxon>
        <taxon>Pseudomonadati</taxon>
        <taxon>Pseudomonadota</taxon>
        <taxon>Alphaproteobacteria</taxon>
        <taxon>Sphingomonadales</taxon>
        <taxon>Erythrobacteraceae</taxon>
        <taxon>Erythrobacter/Porphyrobacter group</taxon>
        <taxon>Erythrobacter</taxon>
    </lineage>
</organism>
<protein>
    <recommendedName>
        <fullName evidence="1">Bifunctional uridylyltransferase/uridylyl-removing enzyme</fullName>
        <shortName evidence="1">UTase/UR</shortName>
    </recommendedName>
    <alternativeName>
        <fullName evidence="1">Bifunctional [protein-PII] modification enzyme</fullName>
    </alternativeName>
    <alternativeName>
        <fullName evidence="1">Bifunctional nitrogen sensor protein</fullName>
    </alternativeName>
    <domain>
        <recommendedName>
            <fullName evidence="1">[Protein-PII] uridylyltransferase</fullName>
            <shortName evidence="1">PII uridylyltransferase</shortName>
            <shortName evidence="1">UTase</shortName>
            <ecNumber evidence="1">2.7.7.59</ecNumber>
        </recommendedName>
    </domain>
    <domain>
        <recommendedName>
            <fullName evidence="1">[Protein-PII]-UMP uridylyl-removing enzyme</fullName>
            <shortName evidence="1">UR</shortName>
            <ecNumber evidence="1">3.1.4.-</ecNumber>
        </recommendedName>
    </domain>
</protein>
<keyword id="KW-0378">Hydrolase</keyword>
<keyword id="KW-0460">Magnesium</keyword>
<keyword id="KW-0511">Multifunctional enzyme</keyword>
<keyword id="KW-0548">Nucleotidyltransferase</keyword>
<keyword id="KW-1185">Reference proteome</keyword>
<keyword id="KW-0677">Repeat</keyword>
<keyword id="KW-0808">Transferase</keyword>
<comment type="function">
    <text evidence="1">Modifies, by uridylylation and deuridylylation, the PII regulatory proteins (GlnB and homologs), in response to the nitrogen status of the cell that GlnD senses through the glutamine level. Under low glutamine levels, catalyzes the conversion of the PII proteins and UTP to PII-UMP and PPi, while under higher glutamine levels, GlnD hydrolyzes PII-UMP to PII and UMP (deuridylylation). Thus, controls uridylylation state and activity of the PII proteins, and plays an important role in the regulation of nitrogen assimilation and metabolism.</text>
</comment>
<comment type="catalytic activity">
    <reaction evidence="1">
        <text>[protein-PII]-L-tyrosine + UTP = [protein-PII]-uridylyl-L-tyrosine + diphosphate</text>
        <dbReference type="Rhea" id="RHEA:13673"/>
        <dbReference type="Rhea" id="RHEA-COMP:12147"/>
        <dbReference type="Rhea" id="RHEA-COMP:12148"/>
        <dbReference type="ChEBI" id="CHEBI:33019"/>
        <dbReference type="ChEBI" id="CHEBI:46398"/>
        <dbReference type="ChEBI" id="CHEBI:46858"/>
        <dbReference type="ChEBI" id="CHEBI:90602"/>
        <dbReference type="EC" id="2.7.7.59"/>
    </reaction>
</comment>
<comment type="catalytic activity">
    <reaction evidence="1">
        <text>[protein-PII]-uridylyl-L-tyrosine + H2O = [protein-PII]-L-tyrosine + UMP + H(+)</text>
        <dbReference type="Rhea" id="RHEA:48600"/>
        <dbReference type="Rhea" id="RHEA-COMP:12147"/>
        <dbReference type="Rhea" id="RHEA-COMP:12148"/>
        <dbReference type="ChEBI" id="CHEBI:15377"/>
        <dbReference type="ChEBI" id="CHEBI:15378"/>
        <dbReference type="ChEBI" id="CHEBI:46858"/>
        <dbReference type="ChEBI" id="CHEBI:57865"/>
        <dbReference type="ChEBI" id="CHEBI:90602"/>
    </reaction>
</comment>
<comment type="cofactor">
    <cofactor evidence="1">
        <name>Mg(2+)</name>
        <dbReference type="ChEBI" id="CHEBI:18420"/>
    </cofactor>
</comment>
<comment type="activity regulation">
    <text evidence="1">Uridylyltransferase (UTase) activity is inhibited by glutamine, while glutamine activates uridylyl-removing (UR) activity.</text>
</comment>
<comment type="domain">
    <text evidence="1">Has four distinct domains: an N-terminal nucleotidyltransferase (NT) domain responsible for UTase activity, a central HD domain that encodes UR activity, and two C-terminal ACT domains that seem to have a role in glutamine sensing.</text>
</comment>
<comment type="similarity">
    <text evidence="1">Belongs to the GlnD family.</text>
</comment>
<evidence type="ECO:0000255" key="1">
    <source>
        <dbReference type="HAMAP-Rule" id="MF_00277"/>
    </source>
</evidence>
<evidence type="ECO:0000255" key="2">
    <source>
        <dbReference type="PROSITE-ProRule" id="PRU01175"/>
    </source>
</evidence>
<sequence length="919" mass="104003">MTDPKVPRQRRIIDRRKLAAAVEALAEQQGEKARPAVLKVLREALEKGRDELSQRLLDRPSAGHQITAGHAFLVDQLVRVIFDHVTTHLYPVANRSSSERIAVLAVGGYGRAEMAPQSDVDIAFLHPSRRTPWCEQVTEAMLYFLWDLGFKVGQSSRTPEDMVRMAREDLTIRTALLEARFVWGDRELYDEARKRFWSEVVNGTERQFVAEKLAERDARHERMGGTRYVVEPNVKEGKGGLRDLQTLYWIGKYIHRARGAAELVDAGLLTETEYHGFRRAEGFLLAVRCHLHEITGRPEDRLTFDFQKQIAERMRFAERREKSAVERFMQYYFLQVKRVGSLTGVFLAQMDQQFARKRARTGLLAGFNAKSRMLKGYTVFGGKIAAPGDNWFRDDPVRLIEIFQLAEANGLEIDPRSMRQADRDSVLIKDQVRNDPRANAIFLDLLCGRNDPETALRWMNEAGVFGKFVPDFGRVNAQMQFNMYHHYTVDEHTIRAIGFLSKIEKGELAKEHPRSTREIHKVKSRRVAFVAALLHDIAKGRGGDHSILGAEVAEELCPRFGLDEDETDLVAWLVLQHLLMSSTAQKRDLTDPKTIEDFVAEVQSLERLRHLAILTSVDIRAVGPGTWNSWKGQLLGELYDAAHERLRLGHMKHHRSERVAAKKEAVREALGGKAALLEKHGRLLPDSYWIAEPENVISRNIVQYDVAREISEDLSIHCEFDEERGATLVTVIAADHPGLFYRIAGGIHLAGGNIIDARIHTTRNGWAIDNYLVQDPVGQPFAEERQLARIEQAIADAIANRGELVPKLAKRPLKQTRAGAFDVRPRVLFDNDASGRFTVIEVNARDRAALLNRLGRALFENQVIVQSAHITAYGERAADTFYVTDLTGAKITDESRMDTIRQALLDAASDARQAELEPA</sequence>
<feature type="chain" id="PRO_1000022343" description="Bifunctional uridylyltransferase/uridylyl-removing enzyme">
    <location>
        <begin position="1"/>
        <end position="919"/>
    </location>
</feature>
<feature type="domain" description="HD" evidence="2">
    <location>
        <begin position="489"/>
        <end position="611"/>
    </location>
</feature>
<feature type="domain" description="ACT 1" evidence="1">
    <location>
        <begin position="728"/>
        <end position="811"/>
    </location>
</feature>
<feature type="domain" description="ACT 2" evidence="1">
    <location>
        <begin position="839"/>
        <end position="919"/>
    </location>
</feature>
<feature type="region of interest" description="Uridylyltransferase">
    <location>
        <begin position="1"/>
        <end position="373"/>
    </location>
</feature>
<feature type="region of interest" description="Uridylyl-removing">
    <location>
        <begin position="374"/>
        <end position="727"/>
    </location>
</feature>
<gene>
    <name evidence="1" type="primary">glnD</name>
    <name type="ordered locus">ELI_11825</name>
</gene>
<accession>Q2N784</accession>
<proteinExistence type="inferred from homology"/>
<reference key="1">
    <citation type="journal article" date="2009" name="J. Bacteriol.">
        <title>Complete genome sequence of Erythrobacter litoralis HTCC2594.</title>
        <authorList>
            <person name="Oh H.M."/>
            <person name="Giovannoni S.J."/>
            <person name="Ferriera S."/>
            <person name="Johnson J."/>
            <person name="Cho J.C."/>
        </authorList>
    </citation>
    <scope>NUCLEOTIDE SEQUENCE [LARGE SCALE GENOMIC DNA]</scope>
    <source>
        <strain>HTCC2594</strain>
    </source>
</reference>